<name>ASPRX_ORYSJ</name>
<reference key="1">
    <citation type="submission" date="1992-08" db="EMBL/GenBank/DDBJ databases">
        <title>Nucleotide sequence of a cDNA encoding aspartic proteinase in rice.</title>
        <authorList>
            <person name="Hashimoto H."/>
            <person name="Nishi R."/>
            <person name="Uchimiya H."/>
            <person name="Kato A."/>
        </authorList>
    </citation>
    <scope>NUCLEOTIDE SEQUENCE [MRNA]</scope>
</reference>
<reference key="2">
    <citation type="journal article" date="2005" name="Mol. Genet. Genomics">
        <title>A fine physical map of the rice chromosome 5.</title>
        <authorList>
            <person name="Cheng C.-H."/>
            <person name="Chung M.C."/>
            <person name="Liu S.-M."/>
            <person name="Chen S.-K."/>
            <person name="Kao F.Y."/>
            <person name="Lin S.-J."/>
            <person name="Hsiao S.-H."/>
            <person name="Tseng I.C."/>
            <person name="Hsing Y.-I.C."/>
            <person name="Wu H.-P."/>
            <person name="Chen C.-S."/>
            <person name="Shaw J.-F."/>
            <person name="Wu J."/>
            <person name="Matsumoto T."/>
            <person name="Sasaki T."/>
            <person name="Chen H.-C."/>
            <person name="Chow T.-Y."/>
        </authorList>
    </citation>
    <scope>NUCLEOTIDE SEQUENCE [LARGE SCALE GENOMIC DNA]</scope>
    <source>
        <strain>cv. Nipponbare</strain>
    </source>
</reference>
<reference key="3">
    <citation type="journal article" date="2005" name="Nature">
        <title>The map-based sequence of the rice genome.</title>
        <authorList>
            <consortium name="International rice genome sequencing project (IRGSP)"/>
        </authorList>
    </citation>
    <scope>NUCLEOTIDE SEQUENCE [LARGE SCALE GENOMIC DNA]</scope>
    <source>
        <strain>cv. Nipponbare</strain>
    </source>
</reference>
<reference key="4">
    <citation type="journal article" date="2008" name="Nucleic Acids Res.">
        <title>The rice annotation project database (RAP-DB): 2008 update.</title>
        <authorList>
            <consortium name="The rice annotation project (RAP)"/>
        </authorList>
    </citation>
    <scope>GENOME REANNOTATION</scope>
    <source>
        <strain>cv. Nipponbare</strain>
    </source>
</reference>
<reference key="5">
    <citation type="journal article" date="2013" name="Rice">
        <title>Improvement of the Oryza sativa Nipponbare reference genome using next generation sequence and optical map data.</title>
        <authorList>
            <person name="Kawahara Y."/>
            <person name="de la Bastide M."/>
            <person name="Hamilton J.P."/>
            <person name="Kanamori H."/>
            <person name="McCombie W.R."/>
            <person name="Ouyang S."/>
            <person name="Schwartz D.C."/>
            <person name="Tanaka T."/>
            <person name="Wu J."/>
            <person name="Zhou S."/>
            <person name="Childs K.L."/>
            <person name="Davidson R.M."/>
            <person name="Lin H."/>
            <person name="Quesada-Ocampo L."/>
            <person name="Vaillancourt B."/>
            <person name="Sakai H."/>
            <person name="Lee S.S."/>
            <person name="Kim J."/>
            <person name="Numa H."/>
            <person name="Itoh T."/>
            <person name="Buell C.R."/>
            <person name="Matsumoto T."/>
        </authorList>
    </citation>
    <scope>GENOME REANNOTATION</scope>
    <source>
        <strain>cv. Nipponbare</strain>
    </source>
</reference>
<reference key="6">
    <citation type="journal article" date="2003" name="Science">
        <title>Collection, mapping, and annotation of over 28,000 cDNA clones from japonica rice.</title>
        <authorList>
            <consortium name="The rice full-length cDNA consortium"/>
        </authorList>
    </citation>
    <scope>NUCLEOTIDE SEQUENCE [LARGE SCALE MRNA]</scope>
    <source>
        <strain>cv. Nipponbare</strain>
    </source>
</reference>
<reference key="7">
    <citation type="submission" date="1999-06" db="EMBL/GenBank/DDBJ databases">
        <title>Chilling sensitive rice partial mRNA for aspartic protease.</title>
        <authorList>
            <person name="Tao Y."/>
            <person name="Li L."/>
        </authorList>
    </citation>
    <scope>NUCLEOTIDE SEQUENCE [MRNA] OF 405-496</scope>
</reference>
<organism>
    <name type="scientific">Oryza sativa subsp. japonica</name>
    <name type="common">Rice</name>
    <dbReference type="NCBI Taxonomy" id="39947"/>
    <lineage>
        <taxon>Eukaryota</taxon>
        <taxon>Viridiplantae</taxon>
        <taxon>Streptophyta</taxon>
        <taxon>Embryophyta</taxon>
        <taxon>Tracheophyta</taxon>
        <taxon>Spermatophyta</taxon>
        <taxon>Magnoliopsida</taxon>
        <taxon>Liliopsida</taxon>
        <taxon>Poales</taxon>
        <taxon>Poaceae</taxon>
        <taxon>BOP clade</taxon>
        <taxon>Oryzoideae</taxon>
        <taxon>Oryzeae</taxon>
        <taxon>Oryzinae</taxon>
        <taxon>Oryza</taxon>
        <taxon>Oryza sativa</taxon>
    </lineage>
</organism>
<proteinExistence type="evidence at transcript level"/>
<feature type="signal peptide" evidence="2">
    <location>
        <begin position="1"/>
        <end position="24"/>
    </location>
</feature>
<feature type="propeptide" id="PRO_0000025910" description="Activation peptide" evidence="2">
    <location>
        <begin position="25"/>
        <end position="59"/>
    </location>
</feature>
<feature type="chain" id="PRO_0000025911" description="Aspartic proteinase">
    <location>
        <begin position="60"/>
        <end position="496"/>
    </location>
</feature>
<feature type="domain" description="Peptidase A1" evidence="4">
    <location>
        <begin position="77"/>
        <end position="493"/>
    </location>
</feature>
<feature type="domain" description="Saposin B-type" evidence="3">
    <location>
        <begin position="307"/>
        <end position="407"/>
    </location>
</feature>
<feature type="active site" evidence="5">
    <location>
        <position position="95"/>
    </location>
</feature>
<feature type="active site" evidence="5">
    <location>
        <position position="282"/>
    </location>
</feature>
<feature type="glycosylation site" description="N-linked (GlcNAc...) asparagine" evidence="3">
    <location>
        <position position="387"/>
    </location>
</feature>
<feature type="disulfide bond" evidence="3">
    <location>
        <begin position="108"/>
        <end position="114"/>
    </location>
</feature>
<feature type="disulfide bond" evidence="3">
    <location>
        <begin position="273"/>
        <end position="277"/>
    </location>
</feature>
<feature type="disulfide bond" evidence="3">
    <location>
        <begin position="312"/>
        <end position="401"/>
    </location>
</feature>
<feature type="disulfide bond" evidence="3">
    <location>
        <begin position="337"/>
        <end position="373"/>
    </location>
</feature>
<feature type="disulfide bond" evidence="3">
    <location>
        <begin position="343"/>
        <end position="370"/>
    </location>
</feature>
<feature type="disulfide bond" evidence="3">
    <location>
        <begin position="415"/>
        <end position="452"/>
    </location>
</feature>
<feature type="sequence conflict" description="In Ref. 1; BAA02242." evidence="6" ref="1">
    <original>L</original>
    <variation>Q</variation>
    <location>
        <position position="158"/>
    </location>
</feature>
<feature type="sequence conflict" description="In Ref. 7; BAA78908." evidence="6" ref="7">
    <original>K</original>
    <variation>R</variation>
    <location>
        <position position="431"/>
    </location>
</feature>
<feature type="sequence conflict" description="In Ref. 7; BAA78908." evidence="6" ref="7">
    <original>F</original>
    <variation>V</variation>
    <location>
        <position position="492"/>
    </location>
</feature>
<sequence>MAKRHLLLVTTCLWALSCALLLHASSDGFLRVNLNKKRLDKEDLTAAKLAQQGNRLLKTGSSDSDPVPLVDYLNTQYYGVIGLGSPPQNFTVIFDTGSSNLWVPSAKCYFSIACYLHSRYNSKKSSSYKADGETCKITYGSGAISGFFSKDNVLVGDLVVKNQKFIEATRETSVTFIIGKFDGILGLGYPEISVGKAPPIWQSMQEQELLADDVFSFWLNRDPDASSGGELVFGGMDPKHYKGDHTYVPVSRKGYWQFNMGDLLIDGHSTGFCAKGCAAIVDSGTSLLAGPTAIVAQVNHAIGAEGIISTECKEVVSEYGEMILNLLIAQTDPQKVCSQVGLCMFDGKRSVSNGIESVVDKENLGSDAMCSVCEMAVVWIENQLRENKTKELILNYANQLCERLPSPNGESTVSCHQISKMPNLAFTIANKTFILTPEQYIVKLEQGGQTVCISGFMAFDIPPPRGPLWILGDVFMGAYHTVFDFGKDRIGFAKSA</sequence>
<comment type="function">
    <text evidence="1">Involved in the breakdown of propeptides of storage proteins in protein-storage vacuoles.</text>
</comment>
<comment type="subcellular location">
    <subcellularLocation>
        <location evidence="1">Vacuole</location>
    </subcellularLocation>
</comment>
<comment type="similarity">
    <text evidence="6">Belongs to the peptidase A1 family.</text>
</comment>
<keyword id="KW-0064">Aspartyl protease</keyword>
<keyword id="KW-1015">Disulfide bond</keyword>
<keyword id="KW-0325">Glycoprotein</keyword>
<keyword id="KW-0378">Hydrolase</keyword>
<keyword id="KW-0645">Protease</keyword>
<keyword id="KW-1185">Reference proteome</keyword>
<keyword id="KW-0732">Signal</keyword>
<keyword id="KW-0926">Vacuole</keyword>
<keyword id="KW-0865">Zymogen</keyword>
<accession>P42211</accession>
<accession>Q0DKX3</accession>
<accession>Q75L35</accession>
<accession>Q9XIV3</accession>
<evidence type="ECO:0000250" key="1"/>
<evidence type="ECO:0000255" key="2"/>
<evidence type="ECO:0000255" key="3">
    <source>
        <dbReference type="PROSITE-ProRule" id="PRU00415"/>
    </source>
</evidence>
<evidence type="ECO:0000255" key="4">
    <source>
        <dbReference type="PROSITE-ProRule" id="PRU01103"/>
    </source>
</evidence>
<evidence type="ECO:0000255" key="5">
    <source>
        <dbReference type="PROSITE-ProRule" id="PRU10094"/>
    </source>
</evidence>
<evidence type="ECO:0000305" key="6"/>
<protein>
    <recommendedName>
        <fullName>Aspartic proteinase</fullName>
        <ecNumber>3.4.23.-</ecNumber>
    </recommendedName>
</protein>
<gene>
    <name type="primary">RAP</name>
    <name type="ordered locus">Os05g0137400</name>
    <name type="ordered locus">LOC_Os05g04630</name>
    <name type="ORF">OJ1127_B08.13</name>
</gene>
<dbReference type="EC" id="3.4.23.-"/>
<dbReference type="EMBL" id="D12777">
    <property type="protein sequence ID" value="BAA02242.1"/>
    <property type="molecule type" value="mRNA"/>
</dbReference>
<dbReference type="EMBL" id="AC093490">
    <property type="protein sequence ID" value="AAS98423.1"/>
    <property type="molecule type" value="Genomic_DNA"/>
</dbReference>
<dbReference type="EMBL" id="AP008211">
    <property type="protein sequence ID" value="BAF16500.1"/>
    <property type="molecule type" value="Genomic_DNA"/>
</dbReference>
<dbReference type="EMBL" id="AP014961">
    <property type="protein sequence ID" value="BAS92166.1"/>
    <property type="molecule type" value="Genomic_DNA"/>
</dbReference>
<dbReference type="EMBL" id="AK065206">
    <property type="protein sequence ID" value="BAG89416.1"/>
    <property type="molecule type" value="mRNA"/>
</dbReference>
<dbReference type="EMBL" id="AB028888">
    <property type="protein sequence ID" value="BAA78908.1"/>
    <property type="molecule type" value="mRNA"/>
</dbReference>
<dbReference type="PIR" id="JS0732">
    <property type="entry name" value="JS0732"/>
</dbReference>
<dbReference type="SMR" id="P42211"/>
<dbReference type="FunCoup" id="P42211">
    <property type="interactions" value="1107"/>
</dbReference>
<dbReference type="STRING" id="39947.P42211"/>
<dbReference type="GlyCosmos" id="P42211">
    <property type="glycosylation" value="1 site, No reported glycans"/>
</dbReference>
<dbReference type="PaxDb" id="39947-P42211"/>
<dbReference type="EnsemblPlants" id="Os05t0137400-01">
    <property type="protein sequence ID" value="Os05t0137400-01"/>
    <property type="gene ID" value="Os05g0137400"/>
</dbReference>
<dbReference type="Gramene" id="Os05t0137400-01">
    <property type="protein sequence ID" value="Os05t0137400-01"/>
    <property type="gene ID" value="Os05g0137400"/>
</dbReference>
<dbReference type="KEGG" id="dosa:Os05g0137400"/>
<dbReference type="eggNOG" id="KOG1339">
    <property type="taxonomic scope" value="Eukaryota"/>
</dbReference>
<dbReference type="HOGENOM" id="CLU_013253_3_1_1"/>
<dbReference type="InParanoid" id="P42211"/>
<dbReference type="OMA" id="KYDHDAS"/>
<dbReference type="Proteomes" id="UP000000763">
    <property type="component" value="Chromosome 5"/>
</dbReference>
<dbReference type="Proteomes" id="UP000059680">
    <property type="component" value="Chromosome 5"/>
</dbReference>
<dbReference type="GO" id="GO:0005773">
    <property type="term" value="C:vacuole"/>
    <property type="evidence" value="ECO:0007669"/>
    <property type="project" value="UniProtKB-SubCell"/>
</dbReference>
<dbReference type="GO" id="GO:0004190">
    <property type="term" value="F:aspartic-type endopeptidase activity"/>
    <property type="evidence" value="ECO:0000318"/>
    <property type="project" value="GO_Central"/>
</dbReference>
<dbReference type="GO" id="GO:0006629">
    <property type="term" value="P:lipid metabolic process"/>
    <property type="evidence" value="ECO:0007669"/>
    <property type="project" value="InterPro"/>
</dbReference>
<dbReference type="GO" id="GO:0006508">
    <property type="term" value="P:proteolysis"/>
    <property type="evidence" value="ECO:0000318"/>
    <property type="project" value="GO_Central"/>
</dbReference>
<dbReference type="CDD" id="cd06098">
    <property type="entry name" value="phytepsin"/>
    <property type="match status" value="1"/>
</dbReference>
<dbReference type="FunFam" id="1.10.225.10:FF:000001">
    <property type="entry name" value="Aspartic proteinase A1"/>
    <property type="match status" value="1"/>
</dbReference>
<dbReference type="FunFam" id="2.40.70.10:FF:000009">
    <property type="entry name" value="Aspartic proteinase A1"/>
    <property type="match status" value="1"/>
</dbReference>
<dbReference type="FunFam" id="2.40.70.10:FF:000044">
    <property type="entry name" value="Lysosomal aspartic protease"/>
    <property type="match status" value="1"/>
</dbReference>
<dbReference type="Gene3D" id="2.40.70.10">
    <property type="entry name" value="Acid Proteases"/>
    <property type="match status" value="2"/>
</dbReference>
<dbReference type="Gene3D" id="1.10.225.10">
    <property type="entry name" value="Saposin-like"/>
    <property type="match status" value="1"/>
</dbReference>
<dbReference type="InterPro" id="IPR001461">
    <property type="entry name" value="Aspartic_peptidase_A1"/>
</dbReference>
<dbReference type="InterPro" id="IPR001969">
    <property type="entry name" value="Aspartic_peptidase_AS"/>
</dbReference>
<dbReference type="InterPro" id="IPR033121">
    <property type="entry name" value="PEPTIDASE_A1"/>
</dbReference>
<dbReference type="InterPro" id="IPR021109">
    <property type="entry name" value="Peptidase_aspartic_dom_sf"/>
</dbReference>
<dbReference type="InterPro" id="IPR033869">
    <property type="entry name" value="Phytepsin"/>
</dbReference>
<dbReference type="InterPro" id="IPR007856">
    <property type="entry name" value="SapB_1"/>
</dbReference>
<dbReference type="InterPro" id="IPR008138">
    <property type="entry name" value="SapB_2"/>
</dbReference>
<dbReference type="InterPro" id="IPR011001">
    <property type="entry name" value="Saposin-like"/>
</dbReference>
<dbReference type="InterPro" id="IPR008139">
    <property type="entry name" value="SaposinB_dom"/>
</dbReference>
<dbReference type="PANTHER" id="PTHR47966:SF9">
    <property type="entry name" value="ASPARTIC PROTEINASE"/>
    <property type="match status" value="1"/>
</dbReference>
<dbReference type="PANTHER" id="PTHR47966">
    <property type="entry name" value="BETA-SITE APP-CLEAVING ENZYME, ISOFORM A-RELATED"/>
    <property type="match status" value="1"/>
</dbReference>
<dbReference type="Pfam" id="PF00026">
    <property type="entry name" value="Asp"/>
    <property type="match status" value="1"/>
</dbReference>
<dbReference type="Pfam" id="PF05184">
    <property type="entry name" value="SapB_1"/>
    <property type="match status" value="1"/>
</dbReference>
<dbReference type="Pfam" id="PF03489">
    <property type="entry name" value="SapB_2"/>
    <property type="match status" value="1"/>
</dbReference>
<dbReference type="PRINTS" id="PR00792">
    <property type="entry name" value="PEPSIN"/>
</dbReference>
<dbReference type="SMART" id="SM00741">
    <property type="entry name" value="SapB"/>
    <property type="match status" value="2"/>
</dbReference>
<dbReference type="SUPFAM" id="SSF50630">
    <property type="entry name" value="Acid proteases"/>
    <property type="match status" value="1"/>
</dbReference>
<dbReference type="SUPFAM" id="SSF47862">
    <property type="entry name" value="Saposin"/>
    <property type="match status" value="1"/>
</dbReference>
<dbReference type="PROSITE" id="PS00141">
    <property type="entry name" value="ASP_PROTEASE"/>
    <property type="match status" value="2"/>
</dbReference>
<dbReference type="PROSITE" id="PS51767">
    <property type="entry name" value="PEPTIDASE_A1"/>
    <property type="match status" value="1"/>
</dbReference>
<dbReference type="PROSITE" id="PS50015">
    <property type="entry name" value="SAP_B"/>
    <property type="match status" value="2"/>
</dbReference>